<keyword id="KW-0963">Cytoplasm</keyword>
<keyword id="KW-1185">Reference proteome</keyword>
<gene>
    <name evidence="1" type="primary">rraA</name>
    <name type="ordered locus">plu4765</name>
</gene>
<name>RRAA_PHOLL</name>
<reference key="1">
    <citation type="journal article" date="2003" name="Nat. Biotechnol.">
        <title>The genome sequence of the entomopathogenic bacterium Photorhabdus luminescens.</title>
        <authorList>
            <person name="Duchaud E."/>
            <person name="Rusniok C."/>
            <person name="Frangeul L."/>
            <person name="Buchrieser C."/>
            <person name="Givaudan A."/>
            <person name="Taourit S."/>
            <person name="Bocs S."/>
            <person name="Boursaux-Eude C."/>
            <person name="Chandler M."/>
            <person name="Charles J.-F."/>
            <person name="Dassa E."/>
            <person name="Derose R."/>
            <person name="Derzelle S."/>
            <person name="Freyssinet G."/>
            <person name="Gaudriault S."/>
            <person name="Medigue C."/>
            <person name="Lanois A."/>
            <person name="Powell K."/>
            <person name="Siguier P."/>
            <person name="Vincent R."/>
            <person name="Wingate V."/>
            <person name="Zouine M."/>
            <person name="Glaser P."/>
            <person name="Boemare N."/>
            <person name="Danchin A."/>
            <person name="Kunst F."/>
        </authorList>
    </citation>
    <scope>NUCLEOTIDE SEQUENCE [LARGE SCALE GENOMIC DNA]</scope>
    <source>
        <strain>DSM 15139 / CIP 105565 / TT01</strain>
    </source>
</reference>
<evidence type="ECO:0000255" key="1">
    <source>
        <dbReference type="HAMAP-Rule" id="MF_00471"/>
    </source>
</evidence>
<protein>
    <recommendedName>
        <fullName evidence="1">Regulator of ribonuclease activity A</fullName>
    </recommendedName>
</protein>
<sequence>MKYDTSELCDIYQEEVNVVEPMFSNFGGRTSFGGQIITVKCFEDNGLLYDLLEDNGHGRILLVDGGGSVRQALINAELAQLAVQNGWEGIVVYGAVRQVDQLAEFDLGIQAIAAIPAGCRDEGTGASDIRVNFGGVTFFSGDYLYADNTGIILSEEPLELDDNEEDEII</sequence>
<accession>Q7MYB9</accession>
<organism>
    <name type="scientific">Photorhabdus laumondii subsp. laumondii (strain DSM 15139 / CIP 105565 / TT01)</name>
    <name type="common">Photorhabdus luminescens subsp. laumondii</name>
    <dbReference type="NCBI Taxonomy" id="243265"/>
    <lineage>
        <taxon>Bacteria</taxon>
        <taxon>Pseudomonadati</taxon>
        <taxon>Pseudomonadota</taxon>
        <taxon>Gammaproteobacteria</taxon>
        <taxon>Enterobacterales</taxon>
        <taxon>Morganellaceae</taxon>
        <taxon>Photorhabdus</taxon>
    </lineage>
</organism>
<feature type="chain" id="PRO_0000209626" description="Regulator of ribonuclease activity A">
    <location>
        <begin position="1"/>
        <end position="169"/>
    </location>
</feature>
<proteinExistence type="inferred from homology"/>
<dbReference type="EMBL" id="BX571874">
    <property type="protein sequence ID" value="CAE17137.1"/>
    <property type="molecule type" value="Genomic_DNA"/>
</dbReference>
<dbReference type="RefSeq" id="WP_011148830.1">
    <property type="nucleotide sequence ID" value="NC_005126.1"/>
</dbReference>
<dbReference type="SMR" id="Q7MYB9"/>
<dbReference type="STRING" id="243265.plu4765"/>
<dbReference type="GeneID" id="48850998"/>
<dbReference type="KEGG" id="plu:plu4765"/>
<dbReference type="eggNOG" id="COG0684">
    <property type="taxonomic scope" value="Bacteria"/>
</dbReference>
<dbReference type="HOGENOM" id="CLU_072626_4_0_6"/>
<dbReference type="OrthoDB" id="943692at2"/>
<dbReference type="Proteomes" id="UP000002514">
    <property type="component" value="Chromosome"/>
</dbReference>
<dbReference type="GO" id="GO:0005829">
    <property type="term" value="C:cytosol"/>
    <property type="evidence" value="ECO:0007669"/>
    <property type="project" value="TreeGrafter"/>
</dbReference>
<dbReference type="GO" id="GO:0060698">
    <property type="term" value="F:endoribonuclease inhibitor activity"/>
    <property type="evidence" value="ECO:0007669"/>
    <property type="project" value="UniProtKB-UniRule"/>
</dbReference>
<dbReference type="GO" id="GO:0019899">
    <property type="term" value="F:enzyme binding"/>
    <property type="evidence" value="ECO:0007669"/>
    <property type="project" value="UniProtKB-UniRule"/>
</dbReference>
<dbReference type="GO" id="GO:1902369">
    <property type="term" value="P:negative regulation of RNA catabolic process"/>
    <property type="evidence" value="ECO:0007669"/>
    <property type="project" value="TreeGrafter"/>
</dbReference>
<dbReference type="CDD" id="cd16841">
    <property type="entry name" value="RraA_family"/>
    <property type="match status" value="1"/>
</dbReference>
<dbReference type="Gene3D" id="3.50.30.40">
    <property type="entry name" value="Ribonuclease E inhibitor RraA/RraA-like"/>
    <property type="match status" value="1"/>
</dbReference>
<dbReference type="HAMAP" id="MF_00471">
    <property type="entry name" value="RraA"/>
    <property type="match status" value="1"/>
</dbReference>
<dbReference type="InterPro" id="IPR010203">
    <property type="entry name" value="RraA"/>
</dbReference>
<dbReference type="InterPro" id="IPR005493">
    <property type="entry name" value="RraA/RraA-like"/>
</dbReference>
<dbReference type="InterPro" id="IPR036704">
    <property type="entry name" value="RraA/RraA-like_sf"/>
</dbReference>
<dbReference type="InterPro" id="IPR014339">
    <property type="entry name" value="RraA_gpbac"/>
</dbReference>
<dbReference type="NCBIfam" id="TIGR01935">
    <property type="entry name" value="NOT-MenG"/>
    <property type="match status" value="1"/>
</dbReference>
<dbReference type="NCBIfam" id="NF006875">
    <property type="entry name" value="PRK09372.1"/>
    <property type="match status" value="1"/>
</dbReference>
<dbReference type="NCBIfam" id="TIGR02998">
    <property type="entry name" value="RraA_entero"/>
    <property type="match status" value="1"/>
</dbReference>
<dbReference type="PANTHER" id="PTHR33254">
    <property type="entry name" value="4-HYDROXY-4-METHYL-2-OXOGLUTARATE ALDOLASE 3-RELATED"/>
    <property type="match status" value="1"/>
</dbReference>
<dbReference type="PANTHER" id="PTHR33254:SF29">
    <property type="entry name" value="REGULATOR OF RIBONUCLEASE ACTIVITY A"/>
    <property type="match status" value="1"/>
</dbReference>
<dbReference type="Pfam" id="PF03737">
    <property type="entry name" value="RraA-like"/>
    <property type="match status" value="1"/>
</dbReference>
<dbReference type="SUPFAM" id="SSF89562">
    <property type="entry name" value="RraA-like"/>
    <property type="match status" value="1"/>
</dbReference>
<comment type="function">
    <text evidence="1">Globally modulates RNA abundance by binding to RNase E (Rne) and regulating its endonucleolytic activity. Can modulate Rne action in a substrate-dependent manner by altering the composition of the degradosome. Modulates RNA-binding and helicase activities of the degradosome.</text>
</comment>
<comment type="subunit">
    <text evidence="1">Homotrimer. Binds to both RNA-binding sites in the C-terminal region of Rne and to RhlB.</text>
</comment>
<comment type="subcellular location">
    <subcellularLocation>
        <location evidence="1">Cytoplasm</location>
    </subcellularLocation>
</comment>
<comment type="similarity">
    <text evidence="1">Belongs to the RraA family.</text>
</comment>